<reference key="1">
    <citation type="journal article" date="2007" name="BMC Genomics">
        <title>The chloroplast genome sequence of the green alga Leptosira terrestris: multiple losses of the inverted repeat and extensive genome rearrangements within the Trebouxiophyceae.</title>
        <authorList>
            <person name="de Cambiaire J.-C."/>
            <person name="Otis C."/>
            <person name="Turmel M."/>
            <person name="Lemieux C."/>
        </authorList>
    </citation>
    <scope>NUCLEOTIDE SEQUENCE [LARGE SCALE GENOMIC DNA]</scope>
    <source>
        <strain>CCAP 463/2 / UTEX 333</strain>
    </source>
</reference>
<evidence type="ECO:0000255" key="1">
    <source>
        <dbReference type="HAMAP-Rule" id="MF_01347"/>
    </source>
</evidence>
<gene>
    <name evidence="1" type="primary">atpB</name>
</gene>
<protein>
    <recommendedName>
        <fullName evidence="1">ATP synthase subunit beta, chloroplastic</fullName>
        <ecNumber evidence="1">7.1.2.2</ecNumber>
    </recommendedName>
    <alternativeName>
        <fullName evidence="1">ATP synthase F1 sector subunit beta</fullName>
    </alternativeName>
    <alternativeName>
        <fullName evidence="1">F-ATPase subunit beta</fullName>
    </alternativeName>
</protein>
<feature type="chain" id="PRO_0000339625" description="ATP synthase subunit beta, chloroplastic">
    <location>
        <begin position="1"/>
        <end position="482"/>
    </location>
</feature>
<feature type="binding site" evidence="1">
    <location>
        <begin position="162"/>
        <end position="169"/>
    </location>
    <ligand>
        <name>ATP</name>
        <dbReference type="ChEBI" id="CHEBI:30616"/>
    </ligand>
</feature>
<name>ATPB_PLETE</name>
<keyword id="KW-0066">ATP synthesis</keyword>
<keyword id="KW-0067">ATP-binding</keyword>
<keyword id="KW-0139">CF(1)</keyword>
<keyword id="KW-0150">Chloroplast</keyword>
<keyword id="KW-0375">Hydrogen ion transport</keyword>
<keyword id="KW-0406">Ion transport</keyword>
<keyword id="KW-0472">Membrane</keyword>
<keyword id="KW-0547">Nucleotide-binding</keyword>
<keyword id="KW-0934">Plastid</keyword>
<keyword id="KW-0793">Thylakoid</keyword>
<keyword id="KW-1278">Translocase</keyword>
<keyword id="KW-0813">Transport</keyword>
<accession>A6YGB6</accession>
<dbReference type="EC" id="7.1.2.2" evidence="1"/>
<dbReference type="EMBL" id="EF506945">
    <property type="protein sequence ID" value="ABO69330.1"/>
    <property type="molecule type" value="Genomic_DNA"/>
</dbReference>
<dbReference type="RefSeq" id="YP_001382193.1">
    <property type="nucleotide sequence ID" value="NC_009681.1"/>
</dbReference>
<dbReference type="SMR" id="A6YGB6"/>
<dbReference type="GeneID" id="5383739"/>
<dbReference type="GO" id="GO:0009535">
    <property type="term" value="C:chloroplast thylakoid membrane"/>
    <property type="evidence" value="ECO:0007669"/>
    <property type="project" value="UniProtKB-SubCell"/>
</dbReference>
<dbReference type="GO" id="GO:0005739">
    <property type="term" value="C:mitochondrion"/>
    <property type="evidence" value="ECO:0007669"/>
    <property type="project" value="GOC"/>
</dbReference>
<dbReference type="GO" id="GO:0045259">
    <property type="term" value="C:proton-transporting ATP synthase complex"/>
    <property type="evidence" value="ECO:0007669"/>
    <property type="project" value="UniProtKB-KW"/>
</dbReference>
<dbReference type="GO" id="GO:0005524">
    <property type="term" value="F:ATP binding"/>
    <property type="evidence" value="ECO:0007669"/>
    <property type="project" value="UniProtKB-UniRule"/>
</dbReference>
<dbReference type="GO" id="GO:0016887">
    <property type="term" value="F:ATP hydrolysis activity"/>
    <property type="evidence" value="ECO:0007669"/>
    <property type="project" value="InterPro"/>
</dbReference>
<dbReference type="GO" id="GO:0046933">
    <property type="term" value="F:proton-transporting ATP synthase activity, rotational mechanism"/>
    <property type="evidence" value="ECO:0007669"/>
    <property type="project" value="UniProtKB-UniRule"/>
</dbReference>
<dbReference type="GO" id="GO:0042776">
    <property type="term" value="P:proton motive force-driven mitochondrial ATP synthesis"/>
    <property type="evidence" value="ECO:0007669"/>
    <property type="project" value="TreeGrafter"/>
</dbReference>
<dbReference type="CDD" id="cd18110">
    <property type="entry name" value="ATP-synt_F1_beta_C"/>
    <property type="match status" value="1"/>
</dbReference>
<dbReference type="CDD" id="cd18115">
    <property type="entry name" value="ATP-synt_F1_beta_N"/>
    <property type="match status" value="1"/>
</dbReference>
<dbReference type="CDD" id="cd01133">
    <property type="entry name" value="F1-ATPase_beta_CD"/>
    <property type="match status" value="1"/>
</dbReference>
<dbReference type="FunFam" id="1.10.1140.10:FF:000001">
    <property type="entry name" value="ATP synthase subunit beta"/>
    <property type="match status" value="1"/>
</dbReference>
<dbReference type="FunFam" id="3.40.50.12240:FF:000006">
    <property type="entry name" value="ATP synthase subunit beta"/>
    <property type="match status" value="1"/>
</dbReference>
<dbReference type="FunFam" id="3.40.50.300:FF:000004">
    <property type="entry name" value="ATP synthase subunit beta"/>
    <property type="match status" value="1"/>
</dbReference>
<dbReference type="FunFam" id="2.40.10.170:FF:000002">
    <property type="entry name" value="ATP synthase subunit beta, chloroplastic"/>
    <property type="match status" value="1"/>
</dbReference>
<dbReference type="Gene3D" id="2.40.10.170">
    <property type="match status" value="1"/>
</dbReference>
<dbReference type="Gene3D" id="1.10.1140.10">
    <property type="entry name" value="Bovine Mitochondrial F1-atpase, Atp Synthase Beta Chain, Chain D, domain 3"/>
    <property type="match status" value="1"/>
</dbReference>
<dbReference type="Gene3D" id="3.40.50.300">
    <property type="entry name" value="P-loop containing nucleotide triphosphate hydrolases"/>
    <property type="match status" value="1"/>
</dbReference>
<dbReference type="HAMAP" id="MF_01347">
    <property type="entry name" value="ATP_synth_beta_bact"/>
    <property type="match status" value="1"/>
</dbReference>
<dbReference type="InterPro" id="IPR003593">
    <property type="entry name" value="AAA+_ATPase"/>
</dbReference>
<dbReference type="InterPro" id="IPR055190">
    <property type="entry name" value="ATP-synt_VA_C"/>
</dbReference>
<dbReference type="InterPro" id="IPR005722">
    <property type="entry name" value="ATP_synth_F1_bsu"/>
</dbReference>
<dbReference type="InterPro" id="IPR020003">
    <property type="entry name" value="ATPase_a/bsu_AS"/>
</dbReference>
<dbReference type="InterPro" id="IPR050053">
    <property type="entry name" value="ATPase_alpha/beta_chains"/>
</dbReference>
<dbReference type="InterPro" id="IPR004100">
    <property type="entry name" value="ATPase_F1/V1/A1_a/bsu_N"/>
</dbReference>
<dbReference type="InterPro" id="IPR036121">
    <property type="entry name" value="ATPase_F1/V1/A1_a/bsu_N_sf"/>
</dbReference>
<dbReference type="InterPro" id="IPR000194">
    <property type="entry name" value="ATPase_F1/V1/A1_a/bsu_nucl-bd"/>
</dbReference>
<dbReference type="InterPro" id="IPR024034">
    <property type="entry name" value="ATPase_F1/V1_b/a_C"/>
</dbReference>
<dbReference type="InterPro" id="IPR027417">
    <property type="entry name" value="P-loop_NTPase"/>
</dbReference>
<dbReference type="NCBIfam" id="TIGR01039">
    <property type="entry name" value="atpD"/>
    <property type="match status" value="1"/>
</dbReference>
<dbReference type="PANTHER" id="PTHR15184">
    <property type="entry name" value="ATP SYNTHASE"/>
    <property type="match status" value="1"/>
</dbReference>
<dbReference type="PANTHER" id="PTHR15184:SF71">
    <property type="entry name" value="ATP SYNTHASE SUBUNIT BETA, MITOCHONDRIAL"/>
    <property type="match status" value="1"/>
</dbReference>
<dbReference type="Pfam" id="PF00006">
    <property type="entry name" value="ATP-synt_ab"/>
    <property type="match status" value="1"/>
</dbReference>
<dbReference type="Pfam" id="PF02874">
    <property type="entry name" value="ATP-synt_ab_N"/>
    <property type="match status" value="1"/>
</dbReference>
<dbReference type="Pfam" id="PF22919">
    <property type="entry name" value="ATP-synt_VA_C"/>
    <property type="match status" value="1"/>
</dbReference>
<dbReference type="SMART" id="SM00382">
    <property type="entry name" value="AAA"/>
    <property type="match status" value="1"/>
</dbReference>
<dbReference type="SUPFAM" id="SSF47917">
    <property type="entry name" value="C-terminal domain of alpha and beta subunits of F1 ATP synthase"/>
    <property type="match status" value="1"/>
</dbReference>
<dbReference type="SUPFAM" id="SSF50615">
    <property type="entry name" value="N-terminal domain of alpha and beta subunits of F1 ATP synthase"/>
    <property type="match status" value="1"/>
</dbReference>
<dbReference type="SUPFAM" id="SSF52540">
    <property type="entry name" value="P-loop containing nucleoside triphosphate hydrolases"/>
    <property type="match status" value="1"/>
</dbReference>
<dbReference type="PROSITE" id="PS00152">
    <property type="entry name" value="ATPASE_ALPHA_BETA"/>
    <property type="match status" value="1"/>
</dbReference>
<sequence>MTISVQNKNVGRITQIIGPVLDITFSAGKVPNIYNALVVTGKTPSGDEIRVTCEVQQLLGDNCVRAVSMNATDGLMRGLEVIDTGTALTVPVGEATLGRIFNVLGETVDNLGTVGNKQGLPIHRPAPAFVDLDTKLSIFETGIKVVDLLAPYRRGGKIGLFGGAGVGKTVLIMELINNIAKAHGGVSVFGGVGERTREGNDLYMEMKESKVINAENLSESKVALVYGQMNEPPGARMRVALTALTMAEYFRDVNKQDVLLFIDNIFRFVQAGSEVSALLGRMPSAVGYQPTLASEMGGLQERITSTKDGSITSIQAVYVPADDLTDPAPATTFAHLDATTVLSRGLAAKGIYPAVDPLDSTSTMLQPWIVSKEHYECAQNVKQTLQRYKELQDIIAILGLDELAEEDRLLVARARKIERFLSQPFFVAEVFTGAPGKYVSLTETIKGFNLILSGEVDSLPEQAFYMAGTADDVLAQAEALSK</sequence>
<comment type="function">
    <text evidence="1">Produces ATP from ADP in the presence of a proton gradient across the membrane. The catalytic sites are hosted primarily by the beta subunits.</text>
</comment>
<comment type="catalytic activity">
    <reaction evidence="1">
        <text>ATP + H2O + 4 H(+)(in) = ADP + phosphate + 5 H(+)(out)</text>
        <dbReference type="Rhea" id="RHEA:57720"/>
        <dbReference type="ChEBI" id="CHEBI:15377"/>
        <dbReference type="ChEBI" id="CHEBI:15378"/>
        <dbReference type="ChEBI" id="CHEBI:30616"/>
        <dbReference type="ChEBI" id="CHEBI:43474"/>
        <dbReference type="ChEBI" id="CHEBI:456216"/>
        <dbReference type="EC" id="7.1.2.2"/>
    </reaction>
</comment>
<comment type="subunit">
    <text evidence="1">F-type ATPases have 2 components, CF(1) - the catalytic core - and CF(0) - the membrane proton channel. CF(1) has five subunits: alpha(3), beta(3), gamma(1), delta(1), epsilon(1). CF(0) has four main subunits: a(1), b(1), b'(1) and c(9-12).</text>
</comment>
<comment type="subcellular location">
    <subcellularLocation>
        <location evidence="1">Plastid</location>
        <location evidence="1">Chloroplast thylakoid membrane</location>
        <topology evidence="1">Peripheral membrane protein</topology>
    </subcellularLocation>
</comment>
<comment type="similarity">
    <text evidence="1">Belongs to the ATPase alpha/beta chains family.</text>
</comment>
<geneLocation type="chloroplast"/>
<proteinExistence type="inferred from homology"/>
<organism>
    <name type="scientific">Pleurastrum terricola</name>
    <name type="common">Filamentous green alga</name>
    <name type="synonym">Leptosira terrestris</name>
    <dbReference type="NCBI Taxonomy" id="34116"/>
    <lineage>
        <taxon>Eukaryota</taxon>
        <taxon>Viridiplantae</taxon>
        <taxon>Chlorophyta</taxon>
        <taxon>core chlorophytes</taxon>
        <taxon>Chlorophyceae</taxon>
        <taxon>CS clade</taxon>
        <taxon>Chlamydomonadales</taxon>
        <taxon>Pleurastraceae</taxon>
        <taxon>Pleurastrum</taxon>
    </lineage>
</organism>